<dbReference type="EC" id="2.1.1.45" evidence="1"/>
<dbReference type="EMBL" id="CP000352">
    <property type="protein sequence ID" value="ABF09445.1"/>
    <property type="molecule type" value="Genomic_DNA"/>
</dbReference>
<dbReference type="RefSeq" id="WP_011517148.1">
    <property type="nucleotide sequence ID" value="NC_007973.1"/>
</dbReference>
<dbReference type="SMR" id="Q1LK81"/>
<dbReference type="STRING" id="266264.Rmet_2568"/>
<dbReference type="KEGG" id="rme:Rmet_2568"/>
<dbReference type="eggNOG" id="COG0207">
    <property type="taxonomic scope" value="Bacteria"/>
</dbReference>
<dbReference type="HOGENOM" id="CLU_021669_0_0_4"/>
<dbReference type="UniPathway" id="UPA00575"/>
<dbReference type="Proteomes" id="UP000002429">
    <property type="component" value="Chromosome"/>
</dbReference>
<dbReference type="GO" id="GO:0005829">
    <property type="term" value="C:cytosol"/>
    <property type="evidence" value="ECO:0007669"/>
    <property type="project" value="TreeGrafter"/>
</dbReference>
<dbReference type="GO" id="GO:0004799">
    <property type="term" value="F:thymidylate synthase activity"/>
    <property type="evidence" value="ECO:0007669"/>
    <property type="project" value="UniProtKB-UniRule"/>
</dbReference>
<dbReference type="GO" id="GO:0006231">
    <property type="term" value="P:dTMP biosynthetic process"/>
    <property type="evidence" value="ECO:0007669"/>
    <property type="project" value="UniProtKB-UniRule"/>
</dbReference>
<dbReference type="GO" id="GO:0006235">
    <property type="term" value="P:dTTP biosynthetic process"/>
    <property type="evidence" value="ECO:0007669"/>
    <property type="project" value="UniProtKB-UniRule"/>
</dbReference>
<dbReference type="GO" id="GO:0032259">
    <property type="term" value="P:methylation"/>
    <property type="evidence" value="ECO:0007669"/>
    <property type="project" value="UniProtKB-KW"/>
</dbReference>
<dbReference type="CDD" id="cd00351">
    <property type="entry name" value="TS_Pyrimidine_HMase"/>
    <property type="match status" value="1"/>
</dbReference>
<dbReference type="FunFam" id="3.30.572.10:FF:000001">
    <property type="entry name" value="Thymidylate synthase"/>
    <property type="match status" value="1"/>
</dbReference>
<dbReference type="Gene3D" id="3.30.572.10">
    <property type="entry name" value="Thymidylate synthase/dCMP hydroxymethylase domain"/>
    <property type="match status" value="1"/>
</dbReference>
<dbReference type="HAMAP" id="MF_00008">
    <property type="entry name" value="Thymidy_synth_bact"/>
    <property type="match status" value="1"/>
</dbReference>
<dbReference type="InterPro" id="IPR045097">
    <property type="entry name" value="Thymidate_synth/dCMP_Mease"/>
</dbReference>
<dbReference type="InterPro" id="IPR023451">
    <property type="entry name" value="Thymidate_synth/dCMP_Mease_dom"/>
</dbReference>
<dbReference type="InterPro" id="IPR036926">
    <property type="entry name" value="Thymidate_synth/dCMP_Mease_sf"/>
</dbReference>
<dbReference type="InterPro" id="IPR000398">
    <property type="entry name" value="Thymidylate_synthase"/>
</dbReference>
<dbReference type="InterPro" id="IPR020940">
    <property type="entry name" value="Thymidylate_synthase_AS"/>
</dbReference>
<dbReference type="NCBIfam" id="NF002497">
    <property type="entry name" value="PRK01827.1-3"/>
    <property type="match status" value="1"/>
</dbReference>
<dbReference type="NCBIfam" id="NF002499">
    <property type="entry name" value="PRK01827.1-5"/>
    <property type="match status" value="1"/>
</dbReference>
<dbReference type="NCBIfam" id="TIGR03284">
    <property type="entry name" value="thym_sym"/>
    <property type="match status" value="2"/>
</dbReference>
<dbReference type="PANTHER" id="PTHR11548:SF9">
    <property type="entry name" value="THYMIDYLATE SYNTHASE"/>
    <property type="match status" value="1"/>
</dbReference>
<dbReference type="PANTHER" id="PTHR11548">
    <property type="entry name" value="THYMIDYLATE SYNTHASE 1"/>
    <property type="match status" value="1"/>
</dbReference>
<dbReference type="Pfam" id="PF00303">
    <property type="entry name" value="Thymidylat_synt"/>
    <property type="match status" value="1"/>
</dbReference>
<dbReference type="PRINTS" id="PR00108">
    <property type="entry name" value="THYMDSNTHASE"/>
</dbReference>
<dbReference type="SUPFAM" id="SSF55831">
    <property type="entry name" value="Thymidylate synthase/dCMP hydroxymethylase"/>
    <property type="match status" value="1"/>
</dbReference>
<dbReference type="PROSITE" id="PS00091">
    <property type="entry name" value="THYMIDYLATE_SYNTHASE"/>
    <property type="match status" value="1"/>
</dbReference>
<reference key="1">
    <citation type="journal article" date="2010" name="PLoS ONE">
        <title>The complete genome sequence of Cupriavidus metallidurans strain CH34, a master survivalist in harsh and anthropogenic environments.</title>
        <authorList>
            <person name="Janssen P.J."/>
            <person name="Van Houdt R."/>
            <person name="Moors H."/>
            <person name="Monsieurs P."/>
            <person name="Morin N."/>
            <person name="Michaux A."/>
            <person name="Benotmane M.A."/>
            <person name="Leys N."/>
            <person name="Vallaeys T."/>
            <person name="Lapidus A."/>
            <person name="Monchy S."/>
            <person name="Medigue C."/>
            <person name="Taghavi S."/>
            <person name="McCorkle S."/>
            <person name="Dunn J."/>
            <person name="van der Lelie D."/>
            <person name="Mergeay M."/>
        </authorList>
    </citation>
    <scope>NUCLEOTIDE SEQUENCE [LARGE SCALE GENOMIC DNA]</scope>
    <source>
        <strain>ATCC 43123 / DSM 2839 / NBRC 102507 / CH34</strain>
    </source>
</reference>
<protein>
    <recommendedName>
        <fullName evidence="1">Thymidylate synthase</fullName>
        <shortName evidence="1">TS</shortName>
        <shortName evidence="1">TSase</shortName>
        <ecNumber evidence="1">2.1.1.45</ecNumber>
    </recommendedName>
</protein>
<proteinExistence type="inferred from homology"/>
<sequence>MKQYLDFMRHVYEHGTEKSDRTGTGTRSVFGYQMRFDLNEGFPVVTTKKLHLKSIIHELLWFLQGSTNIKYLKDNGVTIWDEWADANGELGPIYGYQWRAWPTPDGRHIDQITEVVQQIRDNPDSRRLIVSAWNVGEIPQMKLPPCHAFFQFYVADGKLSCQLYQRSADIFLGVPFNIASYALLTHMIAQQCDLGVGDFVWTGGDCHIYSNHFEQVETQLSREPMKLPTLRIKHRPDSIFDYKYDDFELVGYESHPAIKAPVAV</sequence>
<evidence type="ECO:0000255" key="1">
    <source>
        <dbReference type="HAMAP-Rule" id="MF_00008"/>
    </source>
</evidence>
<gene>
    <name evidence="1" type="primary">thyA</name>
    <name type="ordered locus">Rmet_2568</name>
</gene>
<organism>
    <name type="scientific">Cupriavidus metallidurans (strain ATCC 43123 / DSM 2839 / NBRC 102507 / CH34)</name>
    <name type="common">Ralstonia metallidurans</name>
    <dbReference type="NCBI Taxonomy" id="266264"/>
    <lineage>
        <taxon>Bacteria</taxon>
        <taxon>Pseudomonadati</taxon>
        <taxon>Pseudomonadota</taxon>
        <taxon>Betaproteobacteria</taxon>
        <taxon>Burkholderiales</taxon>
        <taxon>Burkholderiaceae</taxon>
        <taxon>Cupriavidus</taxon>
    </lineage>
</organism>
<accession>Q1LK81</accession>
<keyword id="KW-0963">Cytoplasm</keyword>
<keyword id="KW-0489">Methyltransferase</keyword>
<keyword id="KW-0545">Nucleotide biosynthesis</keyword>
<keyword id="KW-1185">Reference proteome</keyword>
<keyword id="KW-0808">Transferase</keyword>
<name>TYSY_CUPMC</name>
<feature type="chain" id="PRO_1000000656" description="Thymidylate synthase">
    <location>
        <begin position="1"/>
        <end position="264"/>
    </location>
</feature>
<feature type="active site" description="Nucleophile" evidence="1">
    <location>
        <position position="146"/>
    </location>
</feature>
<feature type="binding site" description="in other chain" evidence="1">
    <location>
        <position position="21"/>
    </location>
    <ligand>
        <name>dUMP</name>
        <dbReference type="ChEBI" id="CHEBI:246422"/>
        <note>ligand shared between dimeric partners</note>
    </ligand>
</feature>
<feature type="binding site" evidence="1">
    <location>
        <position position="51"/>
    </location>
    <ligand>
        <name>(6R)-5,10-methylene-5,6,7,8-tetrahydrofolate</name>
        <dbReference type="ChEBI" id="CHEBI:15636"/>
    </ligand>
</feature>
<feature type="binding site" evidence="1">
    <location>
        <begin position="126"/>
        <end position="127"/>
    </location>
    <ligand>
        <name>dUMP</name>
        <dbReference type="ChEBI" id="CHEBI:246422"/>
        <note>ligand shared between dimeric partners</note>
    </ligand>
</feature>
<feature type="binding site" description="in other chain" evidence="1">
    <location>
        <begin position="166"/>
        <end position="169"/>
    </location>
    <ligand>
        <name>dUMP</name>
        <dbReference type="ChEBI" id="CHEBI:246422"/>
        <note>ligand shared between dimeric partners</note>
    </ligand>
</feature>
<feature type="binding site" evidence="1">
    <location>
        <position position="169"/>
    </location>
    <ligand>
        <name>(6R)-5,10-methylene-5,6,7,8-tetrahydrofolate</name>
        <dbReference type="ChEBI" id="CHEBI:15636"/>
    </ligand>
</feature>
<feature type="binding site" description="in other chain" evidence="1">
    <location>
        <position position="177"/>
    </location>
    <ligand>
        <name>dUMP</name>
        <dbReference type="ChEBI" id="CHEBI:246422"/>
        <note>ligand shared between dimeric partners</note>
    </ligand>
</feature>
<feature type="binding site" description="in other chain" evidence="1">
    <location>
        <begin position="207"/>
        <end position="209"/>
    </location>
    <ligand>
        <name>dUMP</name>
        <dbReference type="ChEBI" id="CHEBI:246422"/>
        <note>ligand shared between dimeric partners</note>
    </ligand>
</feature>
<feature type="binding site" evidence="1">
    <location>
        <position position="263"/>
    </location>
    <ligand>
        <name>(6R)-5,10-methylene-5,6,7,8-tetrahydrofolate</name>
        <dbReference type="ChEBI" id="CHEBI:15636"/>
    </ligand>
</feature>
<comment type="function">
    <text evidence="1">Catalyzes the reductive methylation of 2'-deoxyuridine-5'-monophosphate (dUMP) to 2'-deoxythymidine-5'-monophosphate (dTMP) while utilizing 5,10-methylenetetrahydrofolate (mTHF) as the methyl donor and reductant in the reaction, yielding dihydrofolate (DHF) as a by-product. This enzymatic reaction provides an intracellular de novo source of dTMP, an essential precursor for DNA biosynthesis.</text>
</comment>
<comment type="catalytic activity">
    <reaction evidence="1">
        <text>dUMP + (6R)-5,10-methylene-5,6,7,8-tetrahydrofolate = 7,8-dihydrofolate + dTMP</text>
        <dbReference type="Rhea" id="RHEA:12104"/>
        <dbReference type="ChEBI" id="CHEBI:15636"/>
        <dbReference type="ChEBI" id="CHEBI:57451"/>
        <dbReference type="ChEBI" id="CHEBI:63528"/>
        <dbReference type="ChEBI" id="CHEBI:246422"/>
        <dbReference type="EC" id="2.1.1.45"/>
    </reaction>
</comment>
<comment type="pathway">
    <text evidence="1">Pyrimidine metabolism; dTTP biosynthesis.</text>
</comment>
<comment type="subunit">
    <text evidence="1">Homodimer.</text>
</comment>
<comment type="subcellular location">
    <subcellularLocation>
        <location evidence="1">Cytoplasm</location>
    </subcellularLocation>
</comment>
<comment type="similarity">
    <text evidence="1">Belongs to the thymidylate synthase family. Bacterial-type ThyA subfamily.</text>
</comment>